<accession>A7Z9S5</accession>
<evidence type="ECO:0000255" key="1">
    <source>
        <dbReference type="HAMAP-Rule" id="MF_00124"/>
    </source>
</evidence>
<keyword id="KW-0067">ATP-binding</keyword>
<keyword id="KW-0963">Cytoplasm</keyword>
<keyword id="KW-0237">DNA synthesis</keyword>
<keyword id="KW-0418">Kinase</keyword>
<keyword id="KW-0479">Metal-binding</keyword>
<keyword id="KW-0547">Nucleotide-binding</keyword>
<keyword id="KW-0808">Transferase</keyword>
<keyword id="KW-0862">Zinc</keyword>
<sequence length="194" mass="21303">MYIMKQSGWLELICGSMFSGKSEELIRRVKRATYAKQEVKVFKPAIDNRYSEEAVVSHNGTSMTSHVISSSAEIWDHISESTDVIAVDEVQFFGESIIGDLSSLADKGYRVIAAGLDMDFRGEPFGVVPNLMAVAESVTKLQAVCSVCGSPASRTQRLIDGKPASYDDPVILVGASESYEARCRHHHEVPKKTD</sequence>
<proteinExistence type="inferred from homology"/>
<dbReference type="EC" id="2.7.1.21" evidence="1"/>
<dbReference type="EMBL" id="CP000560">
    <property type="protein sequence ID" value="ABS75751.1"/>
    <property type="molecule type" value="Genomic_DNA"/>
</dbReference>
<dbReference type="RefSeq" id="WP_007614390.1">
    <property type="nucleotide sequence ID" value="NC_009725.2"/>
</dbReference>
<dbReference type="SMR" id="A7Z9S5"/>
<dbReference type="GeneID" id="93082566"/>
<dbReference type="KEGG" id="bay:RBAM_034220"/>
<dbReference type="HOGENOM" id="CLU_064400_3_0_9"/>
<dbReference type="Proteomes" id="UP000001120">
    <property type="component" value="Chromosome"/>
</dbReference>
<dbReference type="GO" id="GO:0005829">
    <property type="term" value="C:cytosol"/>
    <property type="evidence" value="ECO:0007669"/>
    <property type="project" value="TreeGrafter"/>
</dbReference>
<dbReference type="GO" id="GO:0005524">
    <property type="term" value="F:ATP binding"/>
    <property type="evidence" value="ECO:0007669"/>
    <property type="project" value="UniProtKB-UniRule"/>
</dbReference>
<dbReference type="GO" id="GO:0004797">
    <property type="term" value="F:thymidine kinase activity"/>
    <property type="evidence" value="ECO:0007669"/>
    <property type="project" value="UniProtKB-UniRule"/>
</dbReference>
<dbReference type="GO" id="GO:0008270">
    <property type="term" value="F:zinc ion binding"/>
    <property type="evidence" value="ECO:0007669"/>
    <property type="project" value="UniProtKB-UniRule"/>
</dbReference>
<dbReference type="GO" id="GO:0071897">
    <property type="term" value="P:DNA biosynthetic process"/>
    <property type="evidence" value="ECO:0007669"/>
    <property type="project" value="UniProtKB-KW"/>
</dbReference>
<dbReference type="GO" id="GO:0046104">
    <property type="term" value="P:thymidine metabolic process"/>
    <property type="evidence" value="ECO:0007669"/>
    <property type="project" value="TreeGrafter"/>
</dbReference>
<dbReference type="FunFam" id="3.30.60.20:FF:000026">
    <property type="entry name" value="Thymidine kinase"/>
    <property type="match status" value="1"/>
</dbReference>
<dbReference type="FunFam" id="3.40.50.300:FF:000384">
    <property type="entry name" value="Thymidine kinase"/>
    <property type="match status" value="1"/>
</dbReference>
<dbReference type="Gene3D" id="3.30.60.20">
    <property type="match status" value="1"/>
</dbReference>
<dbReference type="Gene3D" id="3.40.50.300">
    <property type="entry name" value="P-loop containing nucleotide triphosphate hydrolases"/>
    <property type="match status" value="1"/>
</dbReference>
<dbReference type="HAMAP" id="MF_00124">
    <property type="entry name" value="Thymidine_kinase"/>
    <property type="match status" value="1"/>
</dbReference>
<dbReference type="InterPro" id="IPR027417">
    <property type="entry name" value="P-loop_NTPase"/>
</dbReference>
<dbReference type="InterPro" id="IPR001267">
    <property type="entry name" value="Thymidine_kinase"/>
</dbReference>
<dbReference type="InterPro" id="IPR020633">
    <property type="entry name" value="Thymidine_kinase_CS"/>
</dbReference>
<dbReference type="NCBIfam" id="NF003296">
    <property type="entry name" value="PRK04296.1-1"/>
    <property type="match status" value="1"/>
</dbReference>
<dbReference type="PANTHER" id="PTHR11441">
    <property type="entry name" value="THYMIDINE KINASE"/>
    <property type="match status" value="1"/>
</dbReference>
<dbReference type="PANTHER" id="PTHR11441:SF0">
    <property type="entry name" value="THYMIDINE KINASE, CYTOSOLIC"/>
    <property type="match status" value="1"/>
</dbReference>
<dbReference type="Pfam" id="PF00265">
    <property type="entry name" value="TK"/>
    <property type="match status" value="1"/>
</dbReference>
<dbReference type="PIRSF" id="PIRSF035805">
    <property type="entry name" value="TK_cell"/>
    <property type="match status" value="1"/>
</dbReference>
<dbReference type="SUPFAM" id="SSF57716">
    <property type="entry name" value="Glucocorticoid receptor-like (DNA-binding domain)"/>
    <property type="match status" value="1"/>
</dbReference>
<dbReference type="SUPFAM" id="SSF52540">
    <property type="entry name" value="P-loop containing nucleoside triphosphate hydrolases"/>
    <property type="match status" value="1"/>
</dbReference>
<dbReference type="PROSITE" id="PS00603">
    <property type="entry name" value="TK_CELLULAR_TYPE"/>
    <property type="match status" value="1"/>
</dbReference>
<protein>
    <recommendedName>
        <fullName evidence="1">Thymidine kinase</fullName>
        <ecNumber evidence="1">2.7.1.21</ecNumber>
    </recommendedName>
</protein>
<feature type="chain" id="PRO_1000018149" description="Thymidine kinase">
    <location>
        <begin position="1"/>
        <end position="194"/>
    </location>
</feature>
<feature type="active site" description="Proton acceptor" evidence="1">
    <location>
        <position position="89"/>
    </location>
</feature>
<feature type="binding site" evidence="1">
    <location>
        <begin position="15"/>
        <end position="22"/>
    </location>
    <ligand>
        <name>ATP</name>
        <dbReference type="ChEBI" id="CHEBI:30616"/>
    </ligand>
</feature>
<feature type="binding site" evidence="1">
    <location>
        <begin position="88"/>
        <end position="91"/>
    </location>
    <ligand>
        <name>ATP</name>
        <dbReference type="ChEBI" id="CHEBI:30616"/>
    </ligand>
</feature>
<feature type="binding site" evidence="1">
    <location>
        <position position="145"/>
    </location>
    <ligand>
        <name>Zn(2+)</name>
        <dbReference type="ChEBI" id="CHEBI:29105"/>
    </ligand>
</feature>
<feature type="binding site" evidence="1">
    <location>
        <position position="148"/>
    </location>
    <ligand>
        <name>Zn(2+)</name>
        <dbReference type="ChEBI" id="CHEBI:29105"/>
    </ligand>
</feature>
<feature type="binding site" evidence="1">
    <location>
        <position position="183"/>
    </location>
    <ligand>
        <name>Zn(2+)</name>
        <dbReference type="ChEBI" id="CHEBI:29105"/>
    </ligand>
</feature>
<feature type="binding site" evidence="1">
    <location>
        <position position="186"/>
    </location>
    <ligand>
        <name>Zn(2+)</name>
        <dbReference type="ChEBI" id="CHEBI:29105"/>
    </ligand>
</feature>
<gene>
    <name evidence="1" type="primary">tdk</name>
    <name type="ordered locus">RBAM_034220</name>
</gene>
<name>KITH_BACVZ</name>
<reference key="1">
    <citation type="journal article" date="2007" name="Nat. Biotechnol.">
        <title>Comparative analysis of the complete genome sequence of the plant growth-promoting bacterium Bacillus amyloliquefaciens FZB42.</title>
        <authorList>
            <person name="Chen X.H."/>
            <person name="Koumoutsi A."/>
            <person name="Scholz R."/>
            <person name="Eisenreich A."/>
            <person name="Schneider K."/>
            <person name="Heinemeyer I."/>
            <person name="Morgenstern B."/>
            <person name="Voss B."/>
            <person name="Hess W.R."/>
            <person name="Reva O."/>
            <person name="Junge H."/>
            <person name="Voigt B."/>
            <person name="Jungblut P.R."/>
            <person name="Vater J."/>
            <person name="Suessmuth R."/>
            <person name="Liesegang H."/>
            <person name="Strittmatter A."/>
            <person name="Gottschalk G."/>
            <person name="Borriss R."/>
        </authorList>
    </citation>
    <scope>NUCLEOTIDE SEQUENCE [LARGE SCALE GENOMIC DNA]</scope>
    <source>
        <strain>DSM 23117 / BGSC 10A6 / LMG 26770 / FZB42</strain>
    </source>
</reference>
<organism>
    <name type="scientific">Bacillus velezensis (strain DSM 23117 / BGSC 10A6 / LMG 26770 / FZB42)</name>
    <name type="common">Bacillus amyloliquefaciens subsp. plantarum</name>
    <dbReference type="NCBI Taxonomy" id="326423"/>
    <lineage>
        <taxon>Bacteria</taxon>
        <taxon>Bacillati</taxon>
        <taxon>Bacillota</taxon>
        <taxon>Bacilli</taxon>
        <taxon>Bacillales</taxon>
        <taxon>Bacillaceae</taxon>
        <taxon>Bacillus</taxon>
        <taxon>Bacillus amyloliquefaciens group</taxon>
    </lineage>
</organism>
<comment type="catalytic activity">
    <reaction evidence="1">
        <text>thymidine + ATP = dTMP + ADP + H(+)</text>
        <dbReference type="Rhea" id="RHEA:19129"/>
        <dbReference type="ChEBI" id="CHEBI:15378"/>
        <dbReference type="ChEBI" id="CHEBI:17748"/>
        <dbReference type="ChEBI" id="CHEBI:30616"/>
        <dbReference type="ChEBI" id="CHEBI:63528"/>
        <dbReference type="ChEBI" id="CHEBI:456216"/>
        <dbReference type="EC" id="2.7.1.21"/>
    </reaction>
</comment>
<comment type="subunit">
    <text evidence="1">Homotetramer.</text>
</comment>
<comment type="subcellular location">
    <subcellularLocation>
        <location evidence="1">Cytoplasm</location>
    </subcellularLocation>
</comment>
<comment type="similarity">
    <text evidence="1">Belongs to the thymidine kinase family.</text>
</comment>